<organism>
    <name type="scientific">Salicornia europaea</name>
    <name type="common">Common glasswort</name>
    <name type="synonym">Salicornia herbacea</name>
    <dbReference type="NCBI Taxonomy" id="206448"/>
    <lineage>
        <taxon>Eukaryota</taxon>
        <taxon>Viridiplantae</taxon>
        <taxon>Streptophyta</taxon>
        <taxon>Embryophyta</taxon>
        <taxon>Tracheophyta</taxon>
        <taxon>Spermatophyta</taxon>
        <taxon>Magnoliopsida</taxon>
        <taxon>eudicotyledons</taxon>
        <taxon>Gunneridae</taxon>
        <taxon>Pentapetalae</taxon>
        <taxon>Caryophyllales</taxon>
        <taxon>Chenopodiaceae</taxon>
        <taxon>Salicornioideae</taxon>
        <taxon>Salicornia</taxon>
        <taxon>Salicornia subgen. Salicornia</taxon>
    </lineage>
</organism>
<geneLocation type="chloroplast"/>
<comment type="function">
    <text evidence="1">Found at the monomer-monomer interface of the photosystem II (PS II) dimer, plays a role in assembly and dimerization of PSII. PSII is a light-driven water plastoquinone oxidoreductase, using light energy to abstract electrons from H(2)O, generating a proton gradient subsequently used for ATP formation.</text>
</comment>
<comment type="subunit">
    <text evidence="1">PSII is composed of 1 copy each of membrane proteins PsbA, PsbB, PsbC, PsbD, PsbE, PsbF, PsbH, PsbI, PsbJ, PsbK, PsbL, PsbM, PsbT, PsbY, PsbZ, Psb30/Ycf12, at least 3 peripheral proteins of the oxygen-evolving complex and a large number of cofactors. It forms dimeric complexes.</text>
</comment>
<comment type="subcellular location">
    <subcellularLocation>
        <location evidence="1">Plastid</location>
        <location evidence="1">Chloroplast thylakoid membrane</location>
        <topology evidence="1">Single-pass membrane protein</topology>
    </subcellularLocation>
</comment>
<comment type="similarity">
    <text evidence="1">Belongs to the PsbT family.</text>
</comment>
<evidence type="ECO:0000255" key="1">
    <source>
        <dbReference type="HAMAP-Rule" id="MF_00808"/>
    </source>
</evidence>
<feature type="chain" id="PRO_0000217977" description="Photosystem II reaction center protein T">
    <location>
        <begin position="1"/>
        <end position="35"/>
    </location>
</feature>
<feature type="transmembrane region" description="Helical" evidence="1">
    <location>
        <begin position="3"/>
        <end position="23"/>
    </location>
</feature>
<keyword id="KW-0150">Chloroplast</keyword>
<keyword id="KW-0472">Membrane</keyword>
<keyword id="KW-0602">Photosynthesis</keyword>
<keyword id="KW-0604">Photosystem II</keyword>
<keyword id="KW-0934">Plastid</keyword>
<keyword id="KW-0793">Thylakoid</keyword>
<keyword id="KW-0812">Transmembrane</keyword>
<keyword id="KW-1133">Transmembrane helix</keyword>
<gene>
    <name evidence="1" type="primary">psbT</name>
</gene>
<accession>Q7GZA2</accession>
<accession>Q7Y7Q6</accession>
<protein>
    <recommendedName>
        <fullName evidence="1">Photosystem II reaction center protein T</fullName>
        <shortName evidence="1">PSII-T</shortName>
    </recommendedName>
</protein>
<reference key="1">
    <citation type="journal article" date="2003" name="Plant Syst. Evol.">
        <title>An integrated molecular and morphological study of the subfamily Suaedoideae Ulbr. (Chenopodiaceae).</title>
        <authorList>
            <person name="Schuetze P."/>
            <person name="Freitag H."/>
            <person name="Weising K."/>
        </authorList>
    </citation>
    <scope>NUCLEOTIDE SEQUENCE [GENOMIC DNA]</scope>
    <source>
        <strain>Isolate Schuetze 1081</strain>
        <strain>Isolate Schuetze 1166</strain>
    </source>
</reference>
<name>PSBT_SALEU</name>
<sequence>MEALVYTFLLVSTLGIIFFAIFFREPPKIQTKKMK</sequence>
<dbReference type="EMBL" id="AY181941">
    <property type="protein sequence ID" value="AAO66181.1"/>
    <property type="molecule type" value="Genomic_DNA"/>
</dbReference>
<dbReference type="EMBL" id="AY181942">
    <property type="protein sequence ID" value="AAO66184.1"/>
    <property type="molecule type" value="Genomic_DNA"/>
</dbReference>
<dbReference type="RefSeq" id="YP_009143750.1">
    <property type="nucleotide sequence ID" value="NC_027225.1"/>
</dbReference>
<dbReference type="SMR" id="Q7GZA2"/>
<dbReference type="GeneID" id="24570135"/>
<dbReference type="GO" id="GO:0009535">
    <property type="term" value="C:chloroplast thylakoid membrane"/>
    <property type="evidence" value="ECO:0007669"/>
    <property type="project" value="UniProtKB-SubCell"/>
</dbReference>
<dbReference type="GO" id="GO:0009539">
    <property type="term" value="C:photosystem II reaction center"/>
    <property type="evidence" value="ECO:0007669"/>
    <property type="project" value="InterPro"/>
</dbReference>
<dbReference type="GO" id="GO:0015979">
    <property type="term" value="P:photosynthesis"/>
    <property type="evidence" value="ECO:0007669"/>
    <property type="project" value="UniProtKB-UniRule"/>
</dbReference>
<dbReference type="HAMAP" id="MF_00808">
    <property type="entry name" value="PSII_PsbT"/>
    <property type="match status" value="1"/>
</dbReference>
<dbReference type="InterPro" id="IPR001743">
    <property type="entry name" value="PSII_PsbT"/>
</dbReference>
<dbReference type="InterPro" id="IPR037268">
    <property type="entry name" value="PSII_PsbT_sf"/>
</dbReference>
<dbReference type="PANTHER" id="PTHR36411">
    <property type="match status" value="1"/>
</dbReference>
<dbReference type="PANTHER" id="PTHR36411:SF2">
    <property type="entry name" value="PHOTOSYSTEM II REACTION CENTER PROTEIN T"/>
    <property type="match status" value="1"/>
</dbReference>
<dbReference type="Pfam" id="PF01405">
    <property type="entry name" value="PsbT"/>
    <property type="match status" value="1"/>
</dbReference>
<dbReference type="SUPFAM" id="SSF161029">
    <property type="entry name" value="Photosystem II reaction center protein T, PsbT"/>
    <property type="match status" value="1"/>
</dbReference>
<proteinExistence type="inferred from homology"/>